<sequence>MKVAVLFLCGVALAAASPSWEHFKGKYGRQYVDAEEDSYRRVIFEQNQKYIEEFNKKYENGEVTFNLAMNKFGDMTLEEFNAVMKGNIPRRSAPVSVFYPKKETGPQATEVDWRTKGAVTPVKDQGQCGSCWAFSTTGSLEGQHFLKTGSLISLAEQQLVDCSRPYGPQGCNGGWMNDAFDYIKANNGIDTEAAYPYEARDGSCRFDSNSVAATCSGHTNIASGSETGLQQAVRDIGPISVTIDAAHSSFQFYSSGVYYEPSCSPSYLDHAVLAVGYGSEGGQDFWLVKNSWATSWGDAGYIKMSRNRNNNCGIATVASYPLV</sequence>
<reference key="1">
    <citation type="journal article" date="1991" name="FEBS Lett.">
        <title>Molecular cloning of three cDNAs that encode cysteine proteinases in the digestive gland of the American lobster (Homarus americanus).</title>
        <authorList>
            <person name="Laycock M.V."/>
            <person name="MacKay R.M."/>
            <person name="Di Fruscio M."/>
            <person name="Gallant J.W."/>
        </authorList>
    </citation>
    <scope>NUCLEOTIDE SEQUENCE [MRNA]</scope>
    <source>
        <tissue>Digestive gland</tissue>
    </source>
</reference>
<reference key="2">
    <citation type="journal article" date="1992" name="FEBS Lett.">
        <authorList>
            <person name="Laycock M.V."/>
            <person name="MacKay R.M."/>
            <person name="Di Fruscio M."/>
            <person name="Gallant J.W."/>
        </authorList>
    </citation>
    <scope>ERRATUM OF PUBMED:1959590</scope>
</reference>
<keyword id="KW-1015">Disulfide bond</keyword>
<keyword id="KW-0378">Hydrolase</keyword>
<keyword id="KW-0645">Protease</keyword>
<keyword id="KW-0732">Signal</keyword>
<keyword id="KW-0788">Thiol protease</keyword>
<keyword id="KW-0865">Zymogen</keyword>
<accession>P25782</accession>
<name>CYSP2_HOMAM</name>
<evidence type="ECO:0000250" key="1"/>
<evidence type="ECO:0000255" key="2"/>
<evidence type="ECO:0000255" key="3">
    <source>
        <dbReference type="PROSITE-ProRule" id="PRU10088"/>
    </source>
</evidence>
<evidence type="ECO:0000255" key="4">
    <source>
        <dbReference type="PROSITE-ProRule" id="PRU10089"/>
    </source>
</evidence>
<evidence type="ECO:0000255" key="5">
    <source>
        <dbReference type="PROSITE-ProRule" id="PRU10090"/>
    </source>
</evidence>
<proteinExistence type="evidence at transcript level"/>
<dbReference type="EC" id="3.4.22.-"/>
<dbReference type="EMBL" id="X63568">
    <property type="protein sequence ID" value="CAA45128.1"/>
    <property type="molecule type" value="mRNA"/>
</dbReference>
<dbReference type="PIR" id="S19650">
    <property type="entry name" value="S19650"/>
</dbReference>
<dbReference type="SMR" id="P25782"/>
<dbReference type="MEROPS" id="I29.003"/>
<dbReference type="EnsemblMetazoa" id="XM_042352857.1">
    <property type="protein sequence ID" value="XP_042208791.1"/>
    <property type="gene ID" value="LOC121857032"/>
</dbReference>
<dbReference type="OrthoDB" id="10263972at2759"/>
<dbReference type="GO" id="GO:0008234">
    <property type="term" value="F:cysteine-type peptidase activity"/>
    <property type="evidence" value="ECO:0007669"/>
    <property type="project" value="UniProtKB-KW"/>
</dbReference>
<dbReference type="GO" id="GO:0006508">
    <property type="term" value="P:proteolysis"/>
    <property type="evidence" value="ECO:0007669"/>
    <property type="project" value="UniProtKB-KW"/>
</dbReference>
<dbReference type="CDD" id="cd02248">
    <property type="entry name" value="Peptidase_C1A"/>
    <property type="match status" value="1"/>
</dbReference>
<dbReference type="FunFam" id="3.90.70.10:FF:000006">
    <property type="entry name" value="Cathepsin S"/>
    <property type="match status" value="1"/>
</dbReference>
<dbReference type="Gene3D" id="3.90.70.10">
    <property type="entry name" value="Cysteine proteinases"/>
    <property type="match status" value="1"/>
</dbReference>
<dbReference type="InterPro" id="IPR038765">
    <property type="entry name" value="Papain-like_cys_pep_sf"/>
</dbReference>
<dbReference type="InterPro" id="IPR025661">
    <property type="entry name" value="Pept_asp_AS"/>
</dbReference>
<dbReference type="InterPro" id="IPR000169">
    <property type="entry name" value="Pept_cys_AS"/>
</dbReference>
<dbReference type="InterPro" id="IPR025660">
    <property type="entry name" value="Pept_his_AS"/>
</dbReference>
<dbReference type="InterPro" id="IPR013128">
    <property type="entry name" value="Peptidase_C1A"/>
</dbReference>
<dbReference type="InterPro" id="IPR000668">
    <property type="entry name" value="Peptidase_C1A_C"/>
</dbReference>
<dbReference type="InterPro" id="IPR039417">
    <property type="entry name" value="Peptidase_C1A_papain-like"/>
</dbReference>
<dbReference type="InterPro" id="IPR013201">
    <property type="entry name" value="Prot_inhib_I29"/>
</dbReference>
<dbReference type="PANTHER" id="PTHR12411">
    <property type="entry name" value="CYSTEINE PROTEASE FAMILY C1-RELATED"/>
    <property type="match status" value="1"/>
</dbReference>
<dbReference type="Pfam" id="PF08246">
    <property type="entry name" value="Inhibitor_I29"/>
    <property type="match status" value="1"/>
</dbReference>
<dbReference type="Pfam" id="PF00112">
    <property type="entry name" value="Peptidase_C1"/>
    <property type="match status" value="1"/>
</dbReference>
<dbReference type="PRINTS" id="PR00705">
    <property type="entry name" value="PAPAIN"/>
</dbReference>
<dbReference type="SMART" id="SM00848">
    <property type="entry name" value="Inhibitor_I29"/>
    <property type="match status" value="1"/>
</dbReference>
<dbReference type="SMART" id="SM00645">
    <property type="entry name" value="Pept_C1"/>
    <property type="match status" value="1"/>
</dbReference>
<dbReference type="SUPFAM" id="SSF54001">
    <property type="entry name" value="Cysteine proteinases"/>
    <property type="match status" value="1"/>
</dbReference>
<dbReference type="PROSITE" id="PS00640">
    <property type="entry name" value="THIOL_PROTEASE_ASN"/>
    <property type="match status" value="1"/>
</dbReference>
<dbReference type="PROSITE" id="PS00139">
    <property type="entry name" value="THIOL_PROTEASE_CYS"/>
    <property type="match status" value="1"/>
</dbReference>
<dbReference type="PROSITE" id="PS00639">
    <property type="entry name" value="THIOL_PROTEASE_HIS"/>
    <property type="match status" value="1"/>
</dbReference>
<comment type="activity regulation">
    <text>Inhibited by E-64, antipain, leupeptin, heavy metal ions, iodoacetic acid, dithionitrobenzene, p-hydroxymercuri-benzoate; activated by mercaptoethanol and dithiothreitol.</text>
</comment>
<comment type="similarity">
    <text evidence="3 4 5">Belongs to the peptidase C1 family.</text>
</comment>
<gene>
    <name type="primary">LCP2</name>
</gene>
<organism>
    <name type="scientific">Homarus americanus</name>
    <name type="common">American lobster</name>
    <dbReference type="NCBI Taxonomy" id="6706"/>
    <lineage>
        <taxon>Eukaryota</taxon>
        <taxon>Metazoa</taxon>
        <taxon>Ecdysozoa</taxon>
        <taxon>Arthropoda</taxon>
        <taxon>Crustacea</taxon>
        <taxon>Multicrustacea</taxon>
        <taxon>Malacostraca</taxon>
        <taxon>Eumalacostraca</taxon>
        <taxon>Eucarida</taxon>
        <taxon>Decapoda</taxon>
        <taxon>Pleocyemata</taxon>
        <taxon>Astacidea</taxon>
        <taxon>Nephropoidea</taxon>
        <taxon>Nephropidae</taxon>
        <taxon>Homarus</taxon>
    </lineage>
</organism>
<feature type="signal peptide" evidence="2">
    <location>
        <begin position="1"/>
        <end position="16"/>
    </location>
</feature>
<feature type="propeptide" id="PRO_0000026394" description="Activation peptide">
    <location>
        <begin position="17"/>
        <end position="107"/>
    </location>
</feature>
<feature type="chain" id="PRO_0000026395" description="Digestive cysteine proteinase 2">
    <location>
        <begin position="108"/>
        <end position="323"/>
    </location>
</feature>
<feature type="active site" evidence="1">
    <location>
        <position position="131"/>
    </location>
</feature>
<feature type="active site" evidence="1">
    <location>
        <position position="270"/>
    </location>
</feature>
<feature type="active site" evidence="1">
    <location>
        <position position="290"/>
    </location>
</feature>
<feature type="disulfide bond" evidence="1">
    <location>
        <begin position="128"/>
        <end position="171"/>
    </location>
</feature>
<feature type="disulfide bond" evidence="1">
    <location>
        <begin position="162"/>
        <end position="204"/>
    </location>
</feature>
<feature type="disulfide bond" evidence="1">
    <location>
        <begin position="263"/>
        <end position="312"/>
    </location>
</feature>
<protein>
    <recommendedName>
        <fullName>Digestive cysteine proteinase 2</fullName>
        <ecNumber>3.4.22.-</ecNumber>
    </recommendedName>
</protein>